<evidence type="ECO:0000255" key="1">
    <source>
        <dbReference type="HAMAP-Rule" id="MF_03108"/>
    </source>
</evidence>
<evidence type="ECO:0000256" key="2">
    <source>
        <dbReference type="SAM" id="MobiDB-lite"/>
    </source>
</evidence>
<evidence type="ECO:0000269" key="3">
    <source>
    </source>
</evidence>
<evidence type="ECO:0007829" key="4">
    <source>
        <dbReference type="PDB" id="5WHQ"/>
    </source>
</evidence>
<evidence type="ECO:0007829" key="5">
    <source>
        <dbReference type="PDB" id="5WHS"/>
    </source>
</evidence>
<dbReference type="EC" id="1.11.1.21" evidence="1"/>
<dbReference type="EMBL" id="AF459787">
    <property type="protein sequence ID" value="AAL66352.2"/>
    <property type="molecule type" value="mRNA"/>
</dbReference>
<dbReference type="EMBL" id="CM002242">
    <property type="protein sequence ID" value="EAA30509.1"/>
    <property type="molecule type" value="Genomic_DNA"/>
</dbReference>
<dbReference type="RefSeq" id="XP_959745.1">
    <property type="nucleotide sequence ID" value="XM_954652.3"/>
</dbReference>
<dbReference type="PDB" id="5WHQ">
    <property type="method" value="X-ray"/>
    <property type="resolution" value="2.90 A"/>
    <property type="chains" value="A/B=2-753"/>
</dbReference>
<dbReference type="PDB" id="5WHS">
    <property type="method" value="X-ray"/>
    <property type="resolution" value="2.60 A"/>
    <property type="chains" value="A/B=7-741"/>
</dbReference>
<dbReference type="PDBsum" id="5WHQ"/>
<dbReference type="PDBsum" id="5WHS"/>
<dbReference type="SMR" id="Q8X182"/>
<dbReference type="STRING" id="367110.Q8X182"/>
<dbReference type="PeroxiBase" id="2181">
    <property type="entry name" value="NcCP01"/>
</dbReference>
<dbReference type="PaxDb" id="5141-EFNCRP00000005777"/>
<dbReference type="EnsemblFungi" id="EAA30509">
    <property type="protein sequence ID" value="EAA30509"/>
    <property type="gene ID" value="NCU05770"/>
</dbReference>
<dbReference type="GeneID" id="3875883"/>
<dbReference type="KEGG" id="ncr:NCU05770"/>
<dbReference type="VEuPathDB" id="FungiDB:NCU05770"/>
<dbReference type="HOGENOM" id="CLU_025424_2_0_1"/>
<dbReference type="InParanoid" id="Q8X182"/>
<dbReference type="OMA" id="GPETTWL"/>
<dbReference type="OrthoDB" id="407695at2759"/>
<dbReference type="BRENDA" id="1.11.1.6">
    <property type="organism ID" value="3627"/>
</dbReference>
<dbReference type="Proteomes" id="UP000001805">
    <property type="component" value="Chromosome 7, Linkage Group VII"/>
</dbReference>
<dbReference type="GO" id="GO:0005829">
    <property type="term" value="C:cytosol"/>
    <property type="evidence" value="ECO:0000318"/>
    <property type="project" value="GO_Central"/>
</dbReference>
<dbReference type="GO" id="GO:0004096">
    <property type="term" value="F:catalase activity"/>
    <property type="evidence" value="ECO:0000318"/>
    <property type="project" value="GO_Central"/>
</dbReference>
<dbReference type="GO" id="GO:0020037">
    <property type="term" value="F:heme binding"/>
    <property type="evidence" value="ECO:0000318"/>
    <property type="project" value="GO_Central"/>
</dbReference>
<dbReference type="GO" id="GO:0046872">
    <property type="term" value="F:metal ion binding"/>
    <property type="evidence" value="ECO:0007669"/>
    <property type="project" value="UniProtKB-KW"/>
</dbReference>
<dbReference type="GO" id="GO:0070301">
    <property type="term" value="P:cellular response to hydrogen peroxide"/>
    <property type="evidence" value="ECO:0000318"/>
    <property type="project" value="GO_Central"/>
</dbReference>
<dbReference type="GO" id="GO:0042744">
    <property type="term" value="P:hydrogen peroxide catabolic process"/>
    <property type="evidence" value="ECO:0000318"/>
    <property type="project" value="GO_Central"/>
</dbReference>
<dbReference type="CDD" id="cd00649">
    <property type="entry name" value="catalase_peroxidase_1"/>
    <property type="match status" value="1"/>
</dbReference>
<dbReference type="CDD" id="cd08200">
    <property type="entry name" value="catalase_peroxidase_2"/>
    <property type="match status" value="1"/>
</dbReference>
<dbReference type="FunFam" id="1.10.420.10:FF:000002">
    <property type="entry name" value="Catalase-peroxidase"/>
    <property type="match status" value="1"/>
</dbReference>
<dbReference type="FunFam" id="1.10.420.10:FF:000004">
    <property type="entry name" value="Catalase-peroxidase"/>
    <property type="match status" value="1"/>
</dbReference>
<dbReference type="FunFam" id="1.10.520.10:FF:000002">
    <property type="entry name" value="Catalase-peroxidase"/>
    <property type="match status" value="1"/>
</dbReference>
<dbReference type="Gene3D" id="1.10.520.10">
    <property type="match status" value="2"/>
</dbReference>
<dbReference type="Gene3D" id="1.10.420.10">
    <property type="entry name" value="Peroxidase, domain 2"/>
    <property type="match status" value="2"/>
</dbReference>
<dbReference type="HAMAP" id="MF_01961">
    <property type="entry name" value="Catal_peroxid"/>
    <property type="match status" value="1"/>
</dbReference>
<dbReference type="InterPro" id="IPR000763">
    <property type="entry name" value="Catalase_peroxidase"/>
</dbReference>
<dbReference type="InterPro" id="IPR002016">
    <property type="entry name" value="Haem_peroxidase"/>
</dbReference>
<dbReference type="InterPro" id="IPR010255">
    <property type="entry name" value="Haem_peroxidase_sf"/>
</dbReference>
<dbReference type="InterPro" id="IPR019794">
    <property type="entry name" value="Peroxidases_AS"/>
</dbReference>
<dbReference type="InterPro" id="IPR019793">
    <property type="entry name" value="Peroxidases_heam-ligand_BS"/>
</dbReference>
<dbReference type="NCBIfam" id="TIGR00198">
    <property type="entry name" value="cat_per_HPI"/>
    <property type="match status" value="1"/>
</dbReference>
<dbReference type="NCBIfam" id="NF011635">
    <property type="entry name" value="PRK15061.1"/>
    <property type="match status" value="1"/>
</dbReference>
<dbReference type="PANTHER" id="PTHR30555:SF0">
    <property type="entry name" value="CATALASE-PEROXIDASE"/>
    <property type="match status" value="1"/>
</dbReference>
<dbReference type="PANTHER" id="PTHR30555">
    <property type="entry name" value="HYDROPEROXIDASE I, BIFUNCTIONAL CATALASE-PEROXIDASE"/>
    <property type="match status" value="1"/>
</dbReference>
<dbReference type="Pfam" id="PF00141">
    <property type="entry name" value="peroxidase"/>
    <property type="match status" value="2"/>
</dbReference>
<dbReference type="PRINTS" id="PR00460">
    <property type="entry name" value="BPEROXIDASE"/>
</dbReference>
<dbReference type="PRINTS" id="PR00458">
    <property type="entry name" value="PEROXIDASE"/>
</dbReference>
<dbReference type="SUPFAM" id="SSF48113">
    <property type="entry name" value="Heme-dependent peroxidases"/>
    <property type="match status" value="2"/>
</dbReference>
<dbReference type="PROSITE" id="PS00435">
    <property type="entry name" value="PEROXIDASE_1"/>
    <property type="match status" value="1"/>
</dbReference>
<dbReference type="PROSITE" id="PS00436">
    <property type="entry name" value="PEROXIDASE_2"/>
    <property type="match status" value="1"/>
</dbReference>
<dbReference type="PROSITE" id="PS50873">
    <property type="entry name" value="PEROXIDASE_4"/>
    <property type="match status" value="1"/>
</dbReference>
<reference key="1">
    <citation type="journal article" date="2002" name="Biol. Chem.">
        <title>Neurospora crassa catalases, singlet oxygen and cell differentiation.</title>
        <authorList>
            <person name="Peraza L."/>
            <person name="Hansberg W."/>
        </authorList>
    </citation>
    <scope>NUCLEOTIDE SEQUENCE [MRNA]</scope>
    <scope>PROTEIN SEQUENCE OF 654-670</scope>
    <scope>HEME-BINDING</scope>
    <scope>BIOPHYSICOCHEMICAL PROPERTIES</scope>
    <scope>ACTIVITY REGULATION</scope>
    <scope>INDUCTION</scope>
</reference>
<reference key="2">
    <citation type="journal article" date="2003" name="Nature">
        <title>The genome sequence of the filamentous fungus Neurospora crassa.</title>
        <authorList>
            <person name="Galagan J.E."/>
            <person name="Calvo S.E."/>
            <person name="Borkovich K.A."/>
            <person name="Selker E.U."/>
            <person name="Read N.D."/>
            <person name="Jaffe D.B."/>
            <person name="FitzHugh W."/>
            <person name="Ma L.-J."/>
            <person name="Smirnov S."/>
            <person name="Purcell S."/>
            <person name="Rehman B."/>
            <person name="Elkins T."/>
            <person name="Engels R."/>
            <person name="Wang S."/>
            <person name="Nielsen C.B."/>
            <person name="Butler J."/>
            <person name="Endrizzi M."/>
            <person name="Qui D."/>
            <person name="Ianakiev P."/>
            <person name="Bell-Pedersen D."/>
            <person name="Nelson M.A."/>
            <person name="Werner-Washburne M."/>
            <person name="Selitrennikoff C.P."/>
            <person name="Kinsey J.A."/>
            <person name="Braun E.L."/>
            <person name="Zelter A."/>
            <person name="Schulte U."/>
            <person name="Kothe G.O."/>
            <person name="Jedd G."/>
            <person name="Mewes H.-W."/>
            <person name="Staben C."/>
            <person name="Marcotte E."/>
            <person name="Greenberg D."/>
            <person name="Roy A."/>
            <person name="Foley K."/>
            <person name="Naylor J."/>
            <person name="Stange-Thomann N."/>
            <person name="Barrett R."/>
            <person name="Gnerre S."/>
            <person name="Kamal M."/>
            <person name="Kamvysselis M."/>
            <person name="Mauceli E.W."/>
            <person name="Bielke C."/>
            <person name="Rudd S."/>
            <person name="Frishman D."/>
            <person name="Krystofova S."/>
            <person name="Rasmussen C."/>
            <person name="Metzenberg R.L."/>
            <person name="Perkins D.D."/>
            <person name="Kroken S."/>
            <person name="Cogoni C."/>
            <person name="Macino G."/>
            <person name="Catcheside D.E.A."/>
            <person name="Li W."/>
            <person name="Pratt R.J."/>
            <person name="Osmani S.A."/>
            <person name="DeSouza C.P.C."/>
            <person name="Glass N.L."/>
            <person name="Orbach M.J."/>
            <person name="Berglund J.A."/>
            <person name="Voelker R."/>
            <person name="Yarden O."/>
            <person name="Plamann M."/>
            <person name="Seiler S."/>
            <person name="Dunlap J.C."/>
            <person name="Radford A."/>
            <person name="Aramayo R."/>
            <person name="Natvig D.O."/>
            <person name="Alex L.A."/>
            <person name="Mannhaupt G."/>
            <person name="Ebbole D.J."/>
            <person name="Freitag M."/>
            <person name="Paulsen I."/>
            <person name="Sachs M.S."/>
            <person name="Lander E.S."/>
            <person name="Nusbaum C."/>
            <person name="Birren B.W."/>
        </authorList>
    </citation>
    <scope>NUCLEOTIDE SEQUENCE [LARGE SCALE GENOMIC DNA]</scope>
    <source>
        <strain>ATCC 24698 / 74-OR23-1A / CBS 708.71 / DSM 1257 / FGSC 987</strain>
    </source>
</reference>
<sequence length="753" mass="83380">MSECPVRKSNVGGGGTRNHDWWPAQLRLNILRQHTPVSNPLDKDFDYAAAFKSLDYEGLKKDLTKLMTDSQDWWPADFGHYGGLFIRMAWHSAGTYRVTDGRGGGGEGQQRFAPLNSWPDNVSLDKARRLLWPIKQKYGNKISWSDLLLLTGNVALESMGFKTFGFAGGRPDTWEADESVYWGAETTWLGNEDRYSEGQEGHEGHGVVQGDESKKQHTDIHNRDLQSPLASSHMGLIYVNPEGPDGIPDPVASAKDIRVTFGRMAMNDEETVALIAGGHSFGKTHGAGPTHHVGKEPEAAPIEHQGLGWANSFGQGKGPDTITSGLEVTWTPTPTKWGMGYLEYLYKFDWEPTKSPAGANQWVAKNAEPTIPDAYDPNKKKLPTMLTTDIALRMDPAYDKICRDYLANPDKFADAFARAWFKLLHRDMGPRTRWIGPEVPSEILPWEDYIPPVDYQIIDDNDIAALKKEILATGVAPKKLIFVAWSSASSFRGSDKRGGANGARIRLAPQNEWKVNDPSTLREVLAALESVQQKFNDSSSGKKVSLADLIVLGGVAALEQASGLVVPFTPGRNDATQEHTDVHSFTHLEPHADGFRSYGKGTKRVRTEQFLIDRASLLTLSAPELTALIGGLRVLEANYDGSSYGVLTKTPGKLTNDYFVNLLDTNTAWKAADNEGEVFIGYDRKTHDKKWTATRADLIFGAHAELRALAEVYAAVDGEEKFKRDFVAAWHKVMNLDRFDLKQEGRGQNAPKL</sequence>
<feature type="chain" id="PRO_0000055582" description="Catalase-peroxidase">
    <location>
        <begin position="1"/>
        <end position="753"/>
    </location>
</feature>
<feature type="region of interest" description="Disordered" evidence="2">
    <location>
        <begin position="196"/>
        <end position="220"/>
    </location>
</feature>
<feature type="active site" description="Proton acceptor" evidence="1">
    <location>
        <position position="91"/>
    </location>
</feature>
<feature type="binding site" description="axial binding residue" evidence="1">
    <location>
        <position position="279"/>
    </location>
    <ligand>
        <name>heme b</name>
        <dbReference type="ChEBI" id="CHEBI:60344"/>
    </ligand>
    <ligandPart>
        <name>Fe</name>
        <dbReference type="ChEBI" id="CHEBI:18248"/>
    </ligandPart>
</feature>
<feature type="site" description="Transition state stabilizer" evidence="1">
    <location>
        <position position="87"/>
    </location>
</feature>
<feature type="cross-link" description="Tryptophyl-tyrosyl-methioninium (Trp-Tyr) (with M-264)" evidence="1">
    <location>
        <begin position="90"/>
        <end position="238"/>
    </location>
</feature>
<feature type="cross-link" description="Tryptophyl-tyrosyl-methioninium (Tyr-Met) (with W-90)" evidence="1">
    <location>
        <begin position="238"/>
        <end position="264"/>
    </location>
</feature>
<feature type="helix" evidence="5">
    <location>
        <begin position="18"/>
        <end position="21"/>
    </location>
</feature>
<feature type="helix" evidence="5">
    <location>
        <begin position="29"/>
        <end position="31"/>
    </location>
</feature>
<feature type="helix" evidence="5">
    <location>
        <begin position="36"/>
        <end position="38"/>
    </location>
</feature>
<feature type="helix" evidence="5">
    <location>
        <begin position="47"/>
        <end position="52"/>
    </location>
</feature>
<feature type="helix" evidence="5">
    <location>
        <begin position="56"/>
        <end position="66"/>
    </location>
</feature>
<feature type="strand" evidence="4">
    <location>
        <begin position="72"/>
        <end position="74"/>
    </location>
</feature>
<feature type="helix" evidence="5">
    <location>
        <begin position="77"/>
        <end position="79"/>
    </location>
</feature>
<feature type="helix" evidence="5">
    <location>
        <begin position="82"/>
        <end position="89"/>
    </location>
</feature>
<feature type="helix" evidence="5">
    <location>
        <begin position="93"/>
        <end position="95"/>
    </location>
</feature>
<feature type="turn" evidence="5">
    <location>
        <begin position="98"/>
        <end position="100"/>
    </location>
</feature>
<feature type="helix" evidence="5">
    <location>
        <begin position="109"/>
        <end position="111"/>
    </location>
</feature>
<feature type="helix" evidence="5">
    <location>
        <begin position="115"/>
        <end position="117"/>
    </location>
</feature>
<feature type="helix" evidence="5">
    <location>
        <begin position="124"/>
        <end position="130"/>
    </location>
</feature>
<feature type="helix" evidence="5">
    <location>
        <begin position="132"/>
        <end position="138"/>
    </location>
</feature>
<feature type="helix" evidence="5">
    <location>
        <begin position="139"/>
        <end position="141"/>
    </location>
</feature>
<feature type="helix" evidence="5">
    <location>
        <begin position="144"/>
        <end position="158"/>
    </location>
</feature>
<feature type="strand" evidence="5">
    <location>
        <begin position="166"/>
        <end position="168"/>
    </location>
</feature>
<feature type="turn" evidence="5">
    <location>
        <begin position="192"/>
        <end position="194"/>
    </location>
</feature>
<feature type="strand" evidence="5">
    <location>
        <begin position="237"/>
        <end position="239"/>
    </location>
</feature>
<feature type="helix" evidence="5">
    <location>
        <begin position="244"/>
        <end position="246"/>
    </location>
</feature>
<feature type="helix" evidence="5">
    <location>
        <begin position="250"/>
        <end position="262"/>
    </location>
</feature>
<feature type="turn" evidence="5">
    <location>
        <begin position="263"/>
        <end position="265"/>
    </location>
</feature>
<feature type="helix" evidence="5">
    <location>
        <begin position="268"/>
        <end position="278"/>
    </location>
</feature>
<feature type="helix" evidence="5">
    <location>
        <begin position="290"/>
        <end position="292"/>
    </location>
</feature>
<feature type="helix" evidence="5">
    <location>
        <begin position="297"/>
        <end position="299"/>
    </location>
</feature>
<feature type="helix" evidence="5">
    <location>
        <begin position="302"/>
        <end position="304"/>
    </location>
</feature>
<feature type="helix" evidence="5">
    <location>
        <begin position="318"/>
        <end position="320"/>
    </location>
</feature>
<feature type="strand" evidence="5">
    <location>
        <begin position="322"/>
        <end position="325"/>
    </location>
</feature>
<feature type="helix" evidence="5">
    <location>
        <begin position="340"/>
        <end position="347"/>
    </location>
</feature>
<feature type="strand" evidence="5">
    <location>
        <begin position="348"/>
        <end position="354"/>
    </location>
</feature>
<feature type="strand" evidence="5">
    <location>
        <begin position="360"/>
        <end position="366"/>
    </location>
</feature>
<feature type="helix" evidence="5">
    <location>
        <begin position="387"/>
        <end position="394"/>
    </location>
</feature>
<feature type="helix" evidence="5">
    <location>
        <begin position="396"/>
        <end position="407"/>
    </location>
</feature>
<feature type="helix" evidence="5">
    <location>
        <begin position="409"/>
        <end position="425"/>
    </location>
</feature>
<feature type="turn" evidence="4">
    <location>
        <begin position="426"/>
        <end position="428"/>
    </location>
</feature>
<feature type="helix" evidence="5">
    <location>
        <begin position="431"/>
        <end position="433"/>
    </location>
</feature>
<feature type="strand" evidence="5">
    <location>
        <begin position="435"/>
        <end position="438"/>
    </location>
</feature>
<feature type="helix" evidence="5">
    <location>
        <begin position="460"/>
        <end position="472"/>
    </location>
</feature>
<feature type="helix" evidence="5">
    <location>
        <begin position="477"/>
        <end position="488"/>
    </location>
</feature>
<feature type="turn" evidence="5">
    <location>
        <begin position="493"/>
        <end position="496"/>
    </location>
</feature>
<feature type="helix" evidence="5">
    <location>
        <begin position="504"/>
        <end position="506"/>
    </location>
</feature>
<feature type="helix" evidence="5">
    <location>
        <begin position="510"/>
        <end position="512"/>
    </location>
</feature>
<feature type="helix" evidence="5">
    <location>
        <begin position="514"/>
        <end position="516"/>
    </location>
</feature>
<feature type="helix" evidence="5">
    <location>
        <begin position="518"/>
        <end position="536"/>
    </location>
</feature>
<feature type="strand" evidence="5">
    <location>
        <begin position="537"/>
        <end position="539"/>
    </location>
</feature>
<feature type="helix" evidence="5">
    <location>
        <begin position="546"/>
        <end position="560"/>
    </location>
</feature>
<feature type="helix" evidence="5">
    <location>
        <begin position="577"/>
        <end position="579"/>
    </location>
</feature>
<feature type="helix" evidence="5">
    <location>
        <begin position="584"/>
        <end position="588"/>
    </location>
</feature>
<feature type="helix" evidence="5">
    <location>
        <begin position="594"/>
        <end position="596"/>
    </location>
</feature>
<feature type="strand" evidence="5">
    <location>
        <begin position="603"/>
        <end position="605"/>
    </location>
</feature>
<feature type="helix" evidence="5">
    <location>
        <begin position="607"/>
        <end position="617"/>
    </location>
</feature>
<feature type="helix" evidence="5">
    <location>
        <begin position="622"/>
        <end position="634"/>
    </location>
</feature>
<feature type="helix" evidence="4">
    <location>
        <begin position="639"/>
        <end position="641"/>
    </location>
</feature>
<feature type="helix" evidence="5">
    <location>
        <begin position="657"/>
        <end position="662"/>
    </location>
</feature>
<feature type="strand" evidence="5">
    <location>
        <begin position="667"/>
        <end position="683"/>
    </location>
</feature>
<feature type="turn" evidence="5">
    <location>
        <begin position="684"/>
        <end position="686"/>
    </location>
</feature>
<feature type="strand" evidence="5">
    <location>
        <begin position="689"/>
        <end position="694"/>
    </location>
</feature>
<feature type="helix" evidence="5">
    <location>
        <begin position="695"/>
        <end position="702"/>
    </location>
</feature>
<feature type="helix" evidence="5">
    <location>
        <begin position="704"/>
        <end position="713"/>
    </location>
</feature>
<feature type="strand" evidence="4">
    <location>
        <begin position="715"/>
        <end position="717"/>
    </location>
</feature>
<feature type="helix" evidence="5">
    <location>
        <begin position="719"/>
        <end position="734"/>
    </location>
</feature>
<feature type="turn" evidence="5">
    <location>
        <begin position="735"/>
        <end position="737"/>
    </location>
</feature>
<keyword id="KW-0002">3D-structure</keyword>
<keyword id="KW-0963">Cytoplasm</keyword>
<keyword id="KW-0903">Direct protein sequencing</keyword>
<keyword id="KW-0349">Heme</keyword>
<keyword id="KW-0376">Hydrogen peroxide</keyword>
<keyword id="KW-0408">Iron</keyword>
<keyword id="KW-0479">Metal-binding</keyword>
<keyword id="KW-0560">Oxidoreductase</keyword>
<keyword id="KW-0575">Peroxidase</keyword>
<keyword id="KW-1185">Reference proteome</keyword>
<organism>
    <name type="scientific">Neurospora crassa (strain ATCC 24698 / 74-OR23-1A / CBS 708.71 / DSM 1257 / FGSC 987)</name>
    <dbReference type="NCBI Taxonomy" id="367110"/>
    <lineage>
        <taxon>Eukaryota</taxon>
        <taxon>Fungi</taxon>
        <taxon>Dikarya</taxon>
        <taxon>Ascomycota</taxon>
        <taxon>Pezizomycotina</taxon>
        <taxon>Sordariomycetes</taxon>
        <taxon>Sordariomycetidae</taxon>
        <taxon>Sordariales</taxon>
        <taxon>Sordariaceae</taxon>
        <taxon>Neurospora</taxon>
    </lineage>
</organism>
<proteinExistence type="evidence at protein level"/>
<gene>
    <name evidence="1" type="primary">katG</name>
    <name type="synonym">cat-2</name>
    <name type="ORF">NCU05770</name>
</gene>
<protein>
    <recommendedName>
        <fullName evidence="1">Catalase-peroxidase</fullName>
        <shortName evidence="1">CP</shortName>
        <ecNumber evidence="1">1.11.1.21</ecNumber>
    </recommendedName>
    <alternativeName>
        <fullName>Catalase-2</fullName>
    </alternativeName>
    <alternativeName>
        <fullName evidence="1">Peroxidase/catalase</fullName>
    </alternativeName>
</protein>
<name>KATG_NEUCR</name>
<comment type="function">
    <text>Bifunctional enzyme with both catalase and broad-spectrum peroxidase activity.</text>
</comment>
<comment type="catalytic activity">
    <reaction evidence="1">
        <text>H2O2 + AH2 = A + 2 H2O</text>
        <dbReference type="Rhea" id="RHEA:30275"/>
        <dbReference type="ChEBI" id="CHEBI:13193"/>
        <dbReference type="ChEBI" id="CHEBI:15377"/>
        <dbReference type="ChEBI" id="CHEBI:16240"/>
        <dbReference type="ChEBI" id="CHEBI:17499"/>
        <dbReference type="EC" id="1.11.1.21"/>
    </reaction>
</comment>
<comment type="catalytic activity">
    <reaction evidence="1">
        <text>2 H2O2 = O2 + 2 H2O</text>
        <dbReference type="Rhea" id="RHEA:20309"/>
        <dbReference type="ChEBI" id="CHEBI:15377"/>
        <dbReference type="ChEBI" id="CHEBI:15379"/>
        <dbReference type="ChEBI" id="CHEBI:16240"/>
        <dbReference type="EC" id="1.11.1.21"/>
    </reaction>
</comment>
<comment type="cofactor">
    <cofactor evidence="1">
        <name>heme b</name>
        <dbReference type="ChEBI" id="CHEBI:60344"/>
    </cofactor>
    <text evidence="1">Binds 1 heme b (iron(II)-protoporphyrin IX) group per monomer.</text>
</comment>
<comment type="activity regulation">
    <text evidence="3">Inhibited by KCN.</text>
</comment>
<comment type="biophysicochemical properties">
    <kinetics>
        <KM evidence="3">13.2 mM for H(2)O(2) for the catalase reaction</KM>
    </kinetics>
    <phDependence>
        <text evidence="3">Optimum pH is 4.75 for the peroxidase reaction and 6.25 for the catalase reaction.</text>
    </phDependence>
</comment>
<comment type="subunit">
    <text evidence="1">Homodimer or homotetramer.</text>
</comment>
<comment type="subcellular location">
    <subcellularLocation>
        <location evidence="1">Cytoplasm</location>
    </subcellularLocation>
</comment>
<comment type="induction">
    <text evidence="3">Induced in late stationary growth phase.</text>
</comment>
<comment type="PTM">
    <text evidence="1">Formation of the three residue Trp-Tyr-Met cross-link is important for the catalase, but not the peroxidase activity of the enzyme.</text>
</comment>
<comment type="similarity">
    <text evidence="1">Belongs to the peroxidase family. Peroxidase/catalase subfamily.</text>
</comment>
<accession>Q8X182</accession>
<accession>Q7S4Q3</accession>